<feature type="chain" id="PRO_1000017542" description="Large ribosomal subunit protein bL27">
    <location>
        <begin position="1"/>
        <end position="84"/>
    </location>
</feature>
<feature type="region of interest" description="Disordered" evidence="2">
    <location>
        <begin position="1"/>
        <end position="25"/>
    </location>
</feature>
<sequence length="84" mass="8879">MAHKKAGGSSKNGRDSAGKRLGVKRFGGQQVTAGSILVRQRGTTIHPGANVGCGKDYTLYALVDGVVSFERKGKDKKKVSVYAQ</sequence>
<gene>
    <name evidence="1" type="primary">rpmA</name>
    <name type="ordered locus">Pcar_2582</name>
</gene>
<proteinExistence type="inferred from homology"/>
<comment type="similarity">
    <text evidence="1">Belongs to the bacterial ribosomal protein bL27 family.</text>
</comment>
<reference key="1">
    <citation type="submission" date="2005-10" db="EMBL/GenBank/DDBJ databases">
        <title>Complete sequence of Pelobacter carbinolicus DSM 2380.</title>
        <authorList>
            <person name="Copeland A."/>
            <person name="Lucas S."/>
            <person name="Lapidus A."/>
            <person name="Barry K."/>
            <person name="Detter J.C."/>
            <person name="Glavina T."/>
            <person name="Hammon N."/>
            <person name="Israni S."/>
            <person name="Pitluck S."/>
            <person name="Chertkov O."/>
            <person name="Schmutz J."/>
            <person name="Larimer F."/>
            <person name="Land M."/>
            <person name="Kyrpides N."/>
            <person name="Ivanova N."/>
            <person name="Richardson P."/>
        </authorList>
    </citation>
    <scope>NUCLEOTIDE SEQUENCE [LARGE SCALE GENOMIC DNA]</scope>
    <source>
        <strain>DSM 2380 / NBRC 103641 / GraBd1</strain>
    </source>
</reference>
<dbReference type="EMBL" id="CP000142">
    <property type="protein sequence ID" value="ABA89820.1"/>
    <property type="molecule type" value="Genomic_DNA"/>
</dbReference>
<dbReference type="RefSeq" id="WP_011342358.1">
    <property type="nucleotide sequence ID" value="NC_007498.2"/>
</dbReference>
<dbReference type="SMR" id="Q3A1D7"/>
<dbReference type="STRING" id="338963.Pcar_2582"/>
<dbReference type="KEGG" id="pca:Pcar_2582"/>
<dbReference type="eggNOG" id="COG0211">
    <property type="taxonomic scope" value="Bacteria"/>
</dbReference>
<dbReference type="HOGENOM" id="CLU_095424_4_0_7"/>
<dbReference type="OrthoDB" id="9803474at2"/>
<dbReference type="Proteomes" id="UP000002534">
    <property type="component" value="Chromosome"/>
</dbReference>
<dbReference type="GO" id="GO:0022625">
    <property type="term" value="C:cytosolic large ribosomal subunit"/>
    <property type="evidence" value="ECO:0007669"/>
    <property type="project" value="TreeGrafter"/>
</dbReference>
<dbReference type="GO" id="GO:0003735">
    <property type="term" value="F:structural constituent of ribosome"/>
    <property type="evidence" value="ECO:0007669"/>
    <property type="project" value="InterPro"/>
</dbReference>
<dbReference type="GO" id="GO:0006412">
    <property type="term" value="P:translation"/>
    <property type="evidence" value="ECO:0007669"/>
    <property type="project" value="UniProtKB-UniRule"/>
</dbReference>
<dbReference type="FunFam" id="2.40.50.100:FF:000004">
    <property type="entry name" value="50S ribosomal protein L27"/>
    <property type="match status" value="1"/>
</dbReference>
<dbReference type="Gene3D" id="2.40.50.100">
    <property type="match status" value="1"/>
</dbReference>
<dbReference type="HAMAP" id="MF_00539">
    <property type="entry name" value="Ribosomal_bL27"/>
    <property type="match status" value="1"/>
</dbReference>
<dbReference type="InterPro" id="IPR001684">
    <property type="entry name" value="Ribosomal_bL27"/>
</dbReference>
<dbReference type="InterPro" id="IPR018261">
    <property type="entry name" value="Ribosomal_bL27_CS"/>
</dbReference>
<dbReference type="NCBIfam" id="TIGR00062">
    <property type="entry name" value="L27"/>
    <property type="match status" value="1"/>
</dbReference>
<dbReference type="PANTHER" id="PTHR15893:SF0">
    <property type="entry name" value="LARGE RIBOSOMAL SUBUNIT PROTEIN BL27M"/>
    <property type="match status" value="1"/>
</dbReference>
<dbReference type="PANTHER" id="PTHR15893">
    <property type="entry name" value="RIBOSOMAL PROTEIN L27"/>
    <property type="match status" value="1"/>
</dbReference>
<dbReference type="Pfam" id="PF01016">
    <property type="entry name" value="Ribosomal_L27"/>
    <property type="match status" value="1"/>
</dbReference>
<dbReference type="PRINTS" id="PR00063">
    <property type="entry name" value="RIBOSOMALL27"/>
</dbReference>
<dbReference type="SUPFAM" id="SSF110324">
    <property type="entry name" value="Ribosomal L27 protein-like"/>
    <property type="match status" value="1"/>
</dbReference>
<dbReference type="PROSITE" id="PS00831">
    <property type="entry name" value="RIBOSOMAL_L27"/>
    <property type="match status" value="1"/>
</dbReference>
<protein>
    <recommendedName>
        <fullName evidence="1">Large ribosomal subunit protein bL27</fullName>
    </recommendedName>
    <alternativeName>
        <fullName evidence="3">50S ribosomal protein L27</fullName>
    </alternativeName>
</protein>
<name>RL27_SYNC1</name>
<organism>
    <name type="scientific">Syntrophotalea carbinolica (strain DSM 2380 / NBRC 103641 / GraBd1)</name>
    <name type="common">Pelobacter carbinolicus</name>
    <dbReference type="NCBI Taxonomy" id="338963"/>
    <lineage>
        <taxon>Bacteria</taxon>
        <taxon>Pseudomonadati</taxon>
        <taxon>Thermodesulfobacteriota</taxon>
        <taxon>Desulfuromonadia</taxon>
        <taxon>Desulfuromonadales</taxon>
        <taxon>Syntrophotaleaceae</taxon>
        <taxon>Syntrophotalea</taxon>
    </lineage>
</organism>
<keyword id="KW-1185">Reference proteome</keyword>
<keyword id="KW-0687">Ribonucleoprotein</keyword>
<keyword id="KW-0689">Ribosomal protein</keyword>
<accession>Q3A1D7</accession>
<evidence type="ECO:0000255" key="1">
    <source>
        <dbReference type="HAMAP-Rule" id="MF_00539"/>
    </source>
</evidence>
<evidence type="ECO:0000256" key="2">
    <source>
        <dbReference type="SAM" id="MobiDB-lite"/>
    </source>
</evidence>
<evidence type="ECO:0000305" key="3"/>